<evidence type="ECO:0000255" key="1">
    <source>
        <dbReference type="HAMAP-Rule" id="MF_00532"/>
    </source>
</evidence>
<evidence type="ECO:0000256" key="2">
    <source>
        <dbReference type="SAM" id="MobiDB-lite"/>
    </source>
</evidence>
<evidence type="ECO:0000305" key="3"/>
<comment type="similarity">
    <text evidence="1">Belongs to the universal ribosomal protein uS9 family.</text>
</comment>
<gene>
    <name evidence="1" type="primary">rpsI</name>
    <name type="ordered locus">CLL_A0274</name>
</gene>
<organism>
    <name type="scientific">Clostridium botulinum (strain Eklund 17B / Type B)</name>
    <dbReference type="NCBI Taxonomy" id="935198"/>
    <lineage>
        <taxon>Bacteria</taxon>
        <taxon>Bacillati</taxon>
        <taxon>Bacillota</taxon>
        <taxon>Clostridia</taxon>
        <taxon>Eubacteriales</taxon>
        <taxon>Clostridiaceae</taxon>
        <taxon>Clostridium</taxon>
    </lineage>
</organism>
<dbReference type="EMBL" id="CP001056">
    <property type="protein sequence ID" value="ACD24529.1"/>
    <property type="molecule type" value="Genomic_DNA"/>
</dbReference>
<dbReference type="SMR" id="B2TIL1"/>
<dbReference type="KEGG" id="cbk:CLL_A0274"/>
<dbReference type="PATRIC" id="fig|935198.13.peg.249"/>
<dbReference type="HOGENOM" id="CLU_046483_2_1_9"/>
<dbReference type="Proteomes" id="UP000001195">
    <property type="component" value="Chromosome"/>
</dbReference>
<dbReference type="GO" id="GO:0022627">
    <property type="term" value="C:cytosolic small ribosomal subunit"/>
    <property type="evidence" value="ECO:0007669"/>
    <property type="project" value="TreeGrafter"/>
</dbReference>
<dbReference type="GO" id="GO:0003723">
    <property type="term" value="F:RNA binding"/>
    <property type="evidence" value="ECO:0007669"/>
    <property type="project" value="TreeGrafter"/>
</dbReference>
<dbReference type="GO" id="GO:0003735">
    <property type="term" value="F:structural constituent of ribosome"/>
    <property type="evidence" value="ECO:0007669"/>
    <property type="project" value="InterPro"/>
</dbReference>
<dbReference type="GO" id="GO:0006412">
    <property type="term" value="P:translation"/>
    <property type="evidence" value="ECO:0007669"/>
    <property type="project" value="UniProtKB-UniRule"/>
</dbReference>
<dbReference type="FunFam" id="3.30.230.10:FF:000001">
    <property type="entry name" value="30S ribosomal protein S9"/>
    <property type="match status" value="1"/>
</dbReference>
<dbReference type="Gene3D" id="3.30.230.10">
    <property type="match status" value="1"/>
</dbReference>
<dbReference type="HAMAP" id="MF_00532_B">
    <property type="entry name" value="Ribosomal_uS9_B"/>
    <property type="match status" value="1"/>
</dbReference>
<dbReference type="InterPro" id="IPR020568">
    <property type="entry name" value="Ribosomal_Su5_D2-typ_SF"/>
</dbReference>
<dbReference type="InterPro" id="IPR000754">
    <property type="entry name" value="Ribosomal_uS9"/>
</dbReference>
<dbReference type="InterPro" id="IPR023035">
    <property type="entry name" value="Ribosomal_uS9_bac/plastid"/>
</dbReference>
<dbReference type="InterPro" id="IPR020574">
    <property type="entry name" value="Ribosomal_uS9_CS"/>
</dbReference>
<dbReference type="InterPro" id="IPR014721">
    <property type="entry name" value="Ribsml_uS5_D2-typ_fold_subgr"/>
</dbReference>
<dbReference type="NCBIfam" id="NF001099">
    <property type="entry name" value="PRK00132.1"/>
    <property type="match status" value="1"/>
</dbReference>
<dbReference type="PANTHER" id="PTHR21569">
    <property type="entry name" value="RIBOSOMAL PROTEIN S9"/>
    <property type="match status" value="1"/>
</dbReference>
<dbReference type="PANTHER" id="PTHR21569:SF1">
    <property type="entry name" value="SMALL RIBOSOMAL SUBUNIT PROTEIN US9M"/>
    <property type="match status" value="1"/>
</dbReference>
<dbReference type="Pfam" id="PF00380">
    <property type="entry name" value="Ribosomal_S9"/>
    <property type="match status" value="1"/>
</dbReference>
<dbReference type="SUPFAM" id="SSF54211">
    <property type="entry name" value="Ribosomal protein S5 domain 2-like"/>
    <property type="match status" value="1"/>
</dbReference>
<dbReference type="PROSITE" id="PS00360">
    <property type="entry name" value="RIBOSOMAL_S9"/>
    <property type="match status" value="1"/>
</dbReference>
<reference key="1">
    <citation type="submission" date="2008-04" db="EMBL/GenBank/DDBJ databases">
        <title>Complete sequence of Clostridium botulinum strain Eklund.</title>
        <authorList>
            <person name="Brinkac L.M."/>
            <person name="Brown J.L."/>
            <person name="Bruce D."/>
            <person name="Detter C."/>
            <person name="Munk C."/>
            <person name="Smith L.A."/>
            <person name="Smith T.J."/>
            <person name="Sutton G."/>
            <person name="Brettin T.S."/>
        </authorList>
    </citation>
    <scope>NUCLEOTIDE SEQUENCE [LARGE SCALE GENOMIC DNA]</scope>
    <source>
        <strain>Eklund 17B / Type B</strain>
    </source>
</reference>
<proteinExistence type="inferred from homology"/>
<name>RS9_CLOBB</name>
<feature type="chain" id="PRO_1000128106" description="Small ribosomal subunit protein uS9">
    <location>
        <begin position="1"/>
        <end position="130"/>
    </location>
</feature>
<feature type="region of interest" description="Disordered" evidence="2">
    <location>
        <begin position="99"/>
        <end position="130"/>
    </location>
</feature>
<feature type="compositionally biased region" description="Basic and acidic residues" evidence="2">
    <location>
        <begin position="99"/>
        <end position="110"/>
    </location>
</feature>
<feature type="compositionally biased region" description="Basic residues" evidence="2">
    <location>
        <begin position="111"/>
        <end position="130"/>
    </location>
</feature>
<accession>B2TIL1</accession>
<protein>
    <recommendedName>
        <fullName evidence="1">Small ribosomal subunit protein uS9</fullName>
    </recommendedName>
    <alternativeName>
        <fullName evidence="3">30S ribosomal protein S9</fullName>
    </alternativeName>
</protein>
<sequence length="130" mass="14616">MAKVQYMGTGRRKKSVARVRLVPGNGKVVINKREIETFFGLETLRVIVNQPLVLTGTKDKFDVLVNVHGGGFTGQAGAIRHGITRALVKSDETLRPELKKAGFLTRDPRMKERKKYGLKKARRAPQFSKR</sequence>
<keyword id="KW-0687">Ribonucleoprotein</keyword>
<keyword id="KW-0689">Ribosomal protein</keyword>